<dbReference type="EC" id="2.7.7.6" evidence="1"/>
<dbReference type="EMBL" id="AJ749949">
    <property type="protein sequence ID" value="CAG44778.1"/>
    <property type="molecule type" value="Genomic_DNA"/>
</dbReference>
<dbReference type="RefSeq" id="WP_003019910.1">
    <property type="nucleotide sequence ID" value="NZ_CP010290.1"/>
</dbReference>
<dbReference type="RefSeq" id="YP_169211.1">
    <property type="nucleotide sequence ID" value="NC_006570.2"/>
</dbReference>
<dbReference type="SMR" id="Q5NID1"/>
<dbReference type="IntAct" id="Q5NID1">
    <property type="interactions" value="8"/>
</dbReference>
<dbReference type="STRING" id="177416.FTT_0145"/>
<dbReference type="DNASU" id="3191980"/>
<dbReference type="EnsemblBacteria" id="CAG44778">
    <property type="protein sequence ID" value="CAG44778"/>
    <property type="gene ID" value="FTT_0145"/>
</dbReference>
<dbReference type="KEGG" id="ftu:FTT_0145"/>
<dbReference type="eggNOG" id="COG0086">
    <property type="taxonomic scope" value="Bacteria"/>
</dbReference>
<dbReference type="OrthoDB" id="9815296at2"/>
<dbReference type="Proteomes" id="UP000001174">
    <property type="component" value="Chromosome"/>
</dbReference>
<dbReference type="GO" id="GO:0000428">
    <property type="term" value="C:DNA-directed RNA polymerase complex"/>
    <property type="evidence" value="ECO:0007669"/>
    <property type="project" value="UniProtKB-KW"/>
</dbReference>
<dbReference type="GO" id="GO:0003677">
    <property type="term" value="F:DNA binding"/>
    <property type="evidence" value="ECO:0007669"/>
    <property type="project" value="UniProtKB-UniRule"/>
</dbReference>
<dbReference type="GO" id="GO:0003899">
    <property type="term" value="F:DNA-directed RNA polymerase activity"/>
    <property type="evidence" value="ECO:0007669"/>
    <property type="project" value="UniProtKB-UniRule"/>
</dbReference>
<dbReference type="GO" id="GO:0000287">
    <property type="term" value="F:magnesium ion binding"/>
    <property type="evidence" value="ECO:0007669"/>
    <property type="project" value="UniProtKB-UniRule"/>
</dbReference>
<dbReference type="GO" id="GO:0008270">
    <property type="term" value="F:zinc ion binding"/>
    <property type="evidence" value="ECO:0007669"/>
    <property type="project" value="UniProtKB-UniRule"/>
</dbReference>
<dbReference type="GO" id="GO:0006351">
    <property type="term" value="P:DNA-templated transcription"/>
    <property type="evidence" value="ECO:0007669"/>
    <property type="project" value="UniProtKB-UniRule"/>
</dbReference>
<dbReference type="CDD" id="cd02655">
    <property type="entry name" value="RNAP_beta'_C"/>
    <property type="match status" value="1"/>
</dbReference>
<dbReference type="CDD" id="cd01609">
    <property type="entry name" value="RNAP_beta'_N"/>
    <property type="match status" value="1"/>
</dbReference>
<dbReference type="FunFam" id="1.10.132.30:FF:000003">
    <property type="entry name" value="DNA-directed RNA polymerase subunit beta"/>
    <property type="match status" value="1"/>
</dbReference>
<dbReference type="Gene3D" id="1.10.132.30">
    <property type="match status" value="1"/>
</dbReference>
<dbReference type="Gene3D" id="1.10.150.390">
    <property type="match status" value="1"/>
</dbReference>
<dbReference type="Gene3D" id="1.10.1790.20">
    <property type="match status" value="1"/>
</dbReference>
<dbReference type="Gene3D" id="1.10.40.90">
    <property type="match status" value="1"/>
</dbReference>
<dbReference type="Gene3D" id="2.40.40.20">
    <property type="match status" value="1"/>
</dbReference>
<dbReference type="Gene3D" id="2.40.50.100">
    <property type="match status" value="3"/>
</dbReference>
<dbReference type="Gene3D" id="4.10.860.120">
    <property type="entry name" value="RNA polymerase II, clamp domain"/>
    <property type="match status" value="1"/>
</dbReference>
<dbReference type="Gene3D" id="1.10.274.100">
    <property type="entry name" value="RNA polymerase Rpb1, domain 3"/>
    <property type="match status" value="1"/>
</dbReference>
<dbReference type="HAMAP" id="MF_01322">
    <property type="entry name" value="RNApol_bact_RpoC"/>
    <property type="match status" value="1"/>
</dbReference>
<dbReference type="InterPro" id="IPR045867">
    <property type="entry name" value="DNA-dir_RpoC_beta_prime"/>
</dbReference>
<dbReference type="InterPro" id="IPR012754">
    <property type="entry name" value="DNA-dir_RpoC_beta_prime_bact"/>
</dbReference>
<dbReference type="InterPro" id="IPR000722">
    <property type="entry name" value="RNA_pol_asu"/>
</dbReference>
<dbReference type="InterPro" id="IPR006592">
    <property type="entry name" value="RNA_pol_N"/>
</dbReference>
<dbReference type="InterPro" id="IPR007080">
    <property type="entry name" value="RNA_pol_Rpb1_1"/>
</dbReference>
<dbReference type="InterPro" id="IPR007066">
    <property type="entry name" value="RNA_pol_Rpb1_3"/>
</dbReference>
<dbReference type="InterPro" id="IPR042102">
    <property type="entry name" value="RNA_pol_Rpb1_3_sf"/>
</dbReference>
<dbReference type="InterPro" id="IPR007083">
    <property type="entry name" value="RNA_pol_Rpb1_4"/>
</dbReference>
<dbReference type="InterPro" id="IPR007081">
    <property type="entry name" value="RNA_pol_Rpb1_5"/>
</dbReference>
<dbReference type="InterPro" id="IPR044893">
    <property type="entry name" value="RNA_pol_Rpb1_clamp_domain"/>
</dbReference>
<dbReference type="InterPro" id="IPR038120">
    <property type="entry name" value="Rpb1_funnel_sf"/>
</dbReference>
<dbReference type="NCBIfam" id="TIGR02386">
    <property type="entry name" value="rpoC_TIGR"/>
    <property type="match status" value="1"/>
</dbReference>
<dbReference type="PANTHER" id="PTHR19376">
    <property type="entry name" value="DNA-DIRECTED RNA POLYMERASE"/>
    <property type="match status" value="1"/>
</dbReference>
<dbReference type="PANTHER" id="PTHR19376:SF54">
    <property type="entry name" value="DNA-DIRECTED RNA POLYMERASE SUBUNIT BETA"/>
    <property type="match status" value="1"/>
</dbReference>
<dbReference type="Pfam" id="PF04997">
    <property type="entry name" value="RNA_pol_Rpb1_1"/>
    <property type="match status" value="1"/>
</dbReference>
<dbReference type="Pfam" id="PF00623">
    <property type="entry name" value="RNA_pol_Rpb1_2"/>
    <property type="match status" value="2"/>
</dbReference>
<dbReference type="Pfam" id="PF04983">
    <property type="entry name" value="RNA_pol_Rpb1_3"/>
    <property type="match status" value="1"/>
</dbReference>
<dbReference type="Pfam" id="PF05000">
    <property type="entry name" value="RNA_pol_Rpb1_4"/>
    <property type="match status" value="1"/>
</dbReference>
<dbReference type="Pfam" id="PF04998">
    <property type="entry name" value="RNA_pol_Rpb1_5"/>
    <property type="match status" value="1"/>
</dbReference>
<dbReference type="SMART" id="SM00663">
    <property type="entry name" value="RPOLA_N"/>
    <property type="match status" value="1"/>
</dbReference>
<dbReference type="SUPFAM" id="SSF64484">
    <property type="entry name" value="beta and beta-prime subunits of DNA dependent RNA-polymerase"/>
    <property type="match status" value="1"/>
</dbReference>
<gene>
    <name evidence="1" type="primary">rpoC</name>
    <name type="ordered locus">FTT_0145</name>
</gene>
<evidence type="ECO:0000255" key="1">
    <source>
        <dbReference type="HAMAP-Rule" id="MF_01322"/>
    </source>
</evidence>
<proteinExistence type="inferred from homology"/>
<comment type="function">
    <text evidence="1">DNA-dependent RNA polymerase catalyzes the transcription of DNA into RNA using the four ribonucleoside triphosphates as substrates.</text>
</comment>
<comment type="catalytic activity">
    <reaction evidence="1">
        <text>RNA(n) + a ribonucleoside 5'-triphosphate = RNA(n+1) + diphosphate</text>
        <dbReference type="Rhea" id="RHEA:21248"/>
        <dbReference type="Rhea" id="RHEA-COMP:14527"/>
        <dbReference type="Rhea" id="RHEA-COMP:17342"/>
        <dbReference type="ChEBI" id="CHEBI:33019"/>
        <dbReference type="ChEBI" id="CHEBI:61557"/>
        <dbReference type="ChEBI" id="CHEBI:140395"/>
        <dbReference type="EC" id="2.7.7.6"/>
    </reaction>
</comment>
<comment type="cofactor">
    <cofactor evidence="1">
        <name>Mg(2+)</name>
        <dbReference type="ChEBI" id="CHEBI:18420"/>
    </cofactor>
    <text evidence="1">Binds 1 Mg(2+) ion per subunit.</text>
</comment>
<comment type="cofactor">
    <cofactor evidence="1">
        <name>Zn(2+)</name>
        <dbReference type="ChEBI" id="CHEBI:29105"/>
    </cofactor>
    <text evidence="1">Binds 2 Zn(2+) ions per subunit.</text>
</comment>
<comment type="subunit">
    <text evidence="1">The RNAP catalytic core consists of 2 alpha, 1 beta, 1 beta' and 1 omega subunit. When a sigma factor is associated with the core the holoenzyme is formed, which can initiate transcription.</text>
</comment>
<comment type="similarity">
    <text evidence="1">Belongs to the RNA polymerase beta' chain family.</text>
</comment>
<feature type="chain" id="PRO_0000225537" description="DNA-directed RNA polymerase subunit beta'">
    <location>
        <begin position="1"/>
        <end position="1417"/>
    </location>
</feature>
<feature type="binding site" evidence="1">
    <location>
        <position position="68"/>
    </location>
    <ligand>
        <name>Zn(2+)</name>
        <dbReference type="ChEBI" id="CHEBI:29105"/>
        <label>1</label>
    </ligand>
</feature>
<feature type="binding site" evidence="1">
    <location>
        <position position="70"/>
    </location>
    <ligand>
        <name>Zn(2+)</name>
        <dbReference type="ChEBI" id="CHEBI:29105"/>
        <label>1</label>
    </ligand>
</feature>
<feature type="binding site" evidence="1">
    <location>
        <position position="83"/>
    </location>
    <ligand>
        <name>Zn(2+)</name>
        <dbReference type="ChEBI" id="CHEBI:29105"/>
        <label>1</label>
    </ligand>
</feature>
<feature type="binding site" evidence="1">
    <location>
        <position position="86"/>
    </location>
    <ligand>
        <name>Zn(2+)</name>
        <dbReference type="ChEBI" id="CHEBI:29105"/>
        <label>1</label>
    </ligand>
</feature>
<feature type="binding site" evidence="1">
    <location>
        <position position="458"/>
    </location>
    <ligand>
        <name>Mg(2+)</name>
        <dbReference type="ChEBI" id="CHEBI:18420"/>
    </ligand>
</feature>
<feature type="binding site" evidence="1">
    <location>
        <position position="460"/>
    </location>
    <ligand>
        <name>Mg(2+)</name>
        <dbReference type="ChEBI" id="CHEBI:18420"/>
    </ligand>
</feature>
<feature type="binding site" evidence="1">
    <location>
        <position position="462"/>
    </location>
    <ligand>
        <name>Mg(2+)</name>
        <dbReference type="ChEBI" id="CHEBI:18420"/>
    </ligand>
</feature>
<feature type="binding site" evidence="1">
    <location>
        <position position="811"/>
    </location>
    <ligand>
        <name>Zn(2+)</name>
        <dbReference type="ChEBI" id="CHEBI:29105"/>
        <label>2</label>
    </ligand>
</feature>
<feature type="binding site" evidence="1">
    <location>
        <position position="884"/>
    </location>
    <ligand>
        <name>Zn(2+)</name>
        <dbReference type="ChEBI" id="CHEBI:29105"/>
        <label>2</label>
    </ligand>
</feature>
<feature type="binding site" evidence="1">
    <location>
        <position position="891"/>
    </location>
    <ligand>
        <name>Zn(2+)</name>
        <dbReference type="ChEBI" id="CHEBI:29105"/>
        <label>2</label>
    </ligand>
</feature>
<feature type="binding site" evidence="1">
    <location>
        <position position="894"/>
    </location>
    <ligand>
        <name>Zn(2+)</name>
        <dbReference type="ChEBI" id="CHEBI:29105"/>
        <label>2</label>
    </ligand>
</feature>
<sequence>MNNGILHQNYNSKKFDIIKISLASPEVIRSWSHGEVKKPETINYRTFKPERDGLFCAKIFGPIKDYECLCGKYKRLKHRGVVCERCGVEVEQAKVRRERMGHIDLVCPVVHIWYLKSLPSRIGLFLDMPLKNVEKVLYFESYIVTDPGMTPLEKKQLLTDEEYAEALENYGYEFEASMGAEAIRDLLADTDIESEIELLQAECEESKSTAKKEKAIKRLRLLETFQASGNKPEWMVMTVLPVLPPDLRPLVPIEGGRFATSDLNDLYRRVINRNNRLKKLLDLNAPDIIVRNEKRMLQEAVDALLDNGRRGRAVTGSNKRPLKSLADMIKGKQGRFRQNLLGKRVDYSGRSVITVGPSLRLHECGLPKKMALELFKPFVYSKLRLGGHATTIKQAKRMVELEEAVVWDILETVINEHPVLLNRAPTLHRLGIQAFEPRLIEGKAIQLHPLVCAAFNADFDGDQMAVHVPLTVESQLEARVLMMSTNNILSPASGQPIITPTQDIVLGLYYITREKEGARGEGKLFSSYEDVSRAYNSGTIDIHAKIKLRIDRQVFDTKGNTYNEKGVVNTTVGRALLLNILPEGLSFSLLNKVLVKKEISKIINQAFRVLGGKATVVLADKLMYAGFKYSTLSGVSVGVDDMTIPDNKEAKIEEAEKEIKQITEQYQSSLITENERYNNIINIWSKTSDEVGASMMDAISKDTVSINGEKKEIESFNSVYMMAKSGARGSYNQMRQLAGMRGLMAKPDGTMIETAITANFREGLSVLQYFTSTHGARKGLADTALKTANAGYLTRRLVDVAQDLVVIEEDCGTDDGLMFSAIVEDGEVKVPLVERALGRTLAADVVTEKGVVLLEAGTLLDENLVELLDDNGIDMIKVRSPITCKTRRGLCAKCYGRDLARERQVNVGESVGVIAAQSIGEPGTQLTMRTFHTGGAASLGITVSDIKVKTAGKIKFKNIRTVTNKEGQEIVISRAGEIIVSDTMGRVREQHKIPMGAVVPLASGKAVEIGDVIATWDPHAQPLITDVAGKVVLEDVIDGITSKHTYDDLTGQQTIEITSISQRTTSKNLKPVVKIVDEKGAELKSIPLAVGAVLNVADDSILEVGDIVAKIPLEGSKNKDITGGLPRVAELFEARRPKDAAILSPCDGMVRLGNRDTKEKQRIEIIDKNGHIVEEILLPKSRHLVVFDGEQVSRGDVLADGPTDPHDLLKYKGLEEFADYILIEAQSVYRMQGVVINDKHIETIVRQMLRKAVILDEGDSKFVKDESIELVRILEENDKLRKQGKKEVEYELVLMGITRSSLSTESFLSAASFQETTRVLTEASINSQIDNLRGLKENVLIGRLIPTGTGLAVRKESAKIEKMREELGVEDNMVFTDLSSFNPEEISFDSIQSQKEDKDINEDIEESLRNALESLDF</sequence>
<accession>Q5NID1</accession>
<organism>
    <name type="scientific">Francisella tularensis subsp. tularensis (strain SCHU S4 / Schu 4)</name>
    <dbReference type="NCBI Taxonomy" id="177416"/>
    <lineage>
        <taxon>Bacteria</taxon>
        <taxon>Pseudomonadati</taxon>
        <taxon>Pseudomonadota</taxon>
        <taxon>Gammaproteobacteria</taxon>
        <taxon>Thiotrichales</taxon>
        <taxon>Francisellaceae</taxon>
        <taxon>Francisella</taxon>
    </lineage>
</organism>
<reference key="1">
    <citation type="journal article" date="2005" name="Nat. Genet.">
        <title>The complete genome sequence of Francisella tularensis, the causative agent of tularemia.</title>
        <authorList>
            <person name="Larsson P."/>
            <person name="Oyston P.C.F."/>
            <person name="Chain P."/>
            <person name="Chu M.C."/>
            <person name="Duffield M."/>
            <person name="Fuxelius H.-H."/>
            <person name="Garcia E."/>
            <person name="Haelltorp G."/>
            <person name="Johansson D."/>
            <person name="Isherwood K.E."/>
            <person name="Karp P.D."/>
            <person name="Larsson E."/>
            <person name="Liu Y."/>
            <person name="Michell S."/>
            <person name="Prior J."/>
            <person name="Prior R."/>
            <person name="Malfatti S."/>
            <person name="Sjoestedt A."/>
            <person name="Svensson K."/>
            <person name="Thompson N."/>
            <person name="Vergez L."/>
            <person name="Wagg J.K."/>
            <person name="Wren B.W."/>
            <person name="Lindler L.E."/>
            <person name="Andersson S.G.E."/>
            <person name="Forsman M."/>
            <person name="Titball R.W."/>
        </authorList>
    </citation>
    <scope>NUCLEOTIDE SEQUENCE [LARGE SCALE GENOMIC DNA]</scope>
    <source>
        <strain>SCHU S4 / Schu 4</strain>
    </source>
</reference>
<name>RPOC_FRATT</name>
<keyword id="KW-0240">DNA-directed RNA polymerase</keyword>
<keyword id="KW-0460">Magnesium</keyword>
<keyword id="KW-0479">Metal-binding</keyword>
<keyword id="KW-0548">Nucleotidyltransferase</keyword>
<keyword id="KW-1185">Reference proteome</keyword>
<keyword id="KW-0804">Transcription</keyword>
<keyword id="KW-0808">Transferase</keyword>
<keyword id="KW-0862">Zinc</keyword>
<protein>
    <recommendedName>
        <fullName evidence="1">DNA-directed RNA polymerase subunit beta'</fullName>
        <shortName evidence="1">RNAP subunit beta'</shortName>
        <ecNumber evidence="1">2.7.7.6</ecNumber>
    </recommendedName>
    <alternativeName>
        <fullName evidence="1">RNA polymerase subunit beta'</fullName>
    </alternativeName>
    <alternativeName>
        <fullName evidence="1">Transcriptase subunit beta'</fullName>
    </alternativeName>
</protein>